<comment type="function">
    <text evidence="1">The synthetic peptide has weak antimicrobial activity against Gram-negative bacterium E.coli ATCC 10536 (PubMed:24157790). It does not show antimicrobial activity against the Gram-positive bacteria B.amyloliquefacies S499, L.monocytogenes 2231 and S.aureus ATCC 29213, against the Gram-negative bacteria P.putida BTP1 and P.aeruginosa PaO1, or against the fungi S.cerevisiae, R.mucilaginosa, C.cucumerinum, F.oxysporum and B.cinerea (PubMed:24157790).</text>
</comment>
<comment type="subcellular location">
    <subcellularLocation>
        <location evidence="1">Secreted</location>
    </subcellularLocation>
</comment>
<comment type="tissue specificity">
    <text evidence="5">Expressed by the venom gland.</text>
</comment>
<comment type="mass spectrometry" mass="3104.0" method="Electrospray" evidence="1"/>
<proteinExistence type="evidence at protein level"/>
<sequence length="28" mass="3108">GLKDWWNKHKDKIVEVVKDSGKAGLNAA</sequence>
<organism>
    <name type="scientific">Dinoponera quadriceps</name>
    <name type="common">South American ant</name>
    <dbReference type="NCBI Taxonomy" id="609295"/>
    <lineage>
        <taxon>Eukaryota</taxon>
        <taxon>Metazoa</taxon>
        <taxon>Ecdysozoa</taxon>
        <taxon>Arthropoda</taxon>
        <taxon>Hexapoda</taxon>
        <taxon>Insecta</taxon>
        <taxon>Pterygota</taxon>
        <taxon>Neoptera</taxon>
        <taxon>Endopterygota</taxon>
        <taxon>Hymenoptera</taxon>
        <taxon>Apocrita</taxon>
        <taxon>Aculeata</taxon>
        <taxon>Formicoidea</taxon>
        <taxon>Formicidae</taxon>
        <taxon>Ponerinae</taxon>
        <taxon>Ponerini</taxon>
        <taxon>Dinoponera</taxon>
    </lineage>
</organism>
<reference key="1">
    <citation type="journal article" date="2013" name="J. Proteomics">
        <title>Peptidomic comparison and characterization of the major components of the venom of the giant ant Dinoponera quadriceps collected in four different areas of Brazil.</title>
        <authorList>
            <person name="Cologna C.T."/>
            <person name="Cardoso Jdos S."/>
            <person name="Jourdan E."/>
            <person name="Degueldre M."/>
            <person name="Upert G."/>
            <person name="Gilles N."/>
            <person name="Uetanabaro A.P."/>
            <person name="Costa Neto E.M."/>
            <person name="Thonart P."/>
            <person name="de Pauw E."/>
            <person name="Quinton L."/>
        </authorList>
    </citation>
    <scope>PROTEIN SEQUENCE</scope>
    <scope>FUNCTION</scope>
    <scope>SUBCELLULAR LOCATION</scope>
    <scope>MASS SPECTROMETRY</scope>
    <scope>SYNTHESIS</scope>
    <scope>MUTAGENESIS OF 19-ASP--SER-20</scope>
    <scope>AMIDATION AT ALA-28</scope>
    <source>
        <tissue>Venom</tissue>
    </source>
</reference>
<reference key="2">
    <citation type="journal article" date="2016" name="Toxins">
        <title>The biochemical toxin arsenal from ant venoms.</title>
        <authorList>
            <person name="Touchard A."/>
            <person name="Aili S.R."/>
            <person name="Fox E.G."/>
            <person name="Escoubas P."/>
            <person name="Orivel J."/>
            <person name="Nicholson G.M."/>
            <person name="Dejean A."/>
        </authorList>
    </citation>
    <scope>REVIEW</scope>
    <scope>NOMENCLATURE</scope>
</reference>
<accession>C0HJH7</accession>
<dbReference type="Proteomes" id="UP000515204">
    <property type="component" value="Unplaced"/>
</dbReference>
<dbReference type="GO" id="GO:0005576">
    <property type="term" value="C:extracellular region"/>
    <property type="evidence" value="ECO:0007669"/>
    <property type="project" value="UniProtKB-SubCell"/>
</dbReference>
<dbReference type="GO" id="GO:0090729">
    <property type="term" value="F:toxin activity"/>
    <property type="evidence" value="ECO:0007669"/>
    <property type="project" value="UniProtKB-KW"/>
</dbReference>
<dbReference type="GO" id="GO:0042742">
    <property type="term" value="P:defense response to bacterium"/>
    <property type="evidence" value="ECO:0007669"/>
    <property type="project" value="UniProtKB-KW"/>
</dbReference>
<evidence type="ECO:0000269" key="1">
    <source>
    </source>
</evidence>
<evidence type="ECO:0000303" key="2">
    <source>
    </source>
</evidence>
<evidence type="ECO:0000303" key="3">
    <source>
    </source>
</evidence>
<evidence type="ECO:0000305" key="4"/>
<evidence type="ECO:0000305" key="5">
    <source>
    </source>
</evidence>
<name>TX4A_DINQU</name>
<protein>
    <recommendedName>
        <fullName evidence="3">M-poneritoxin-Dq4a</fullName>
        <shortName evidence="3">M-PONTX-Dq4a</shortName>
    </recommendedName>
    <alternativeName>
        <fullName evidence="2">Dinoponeratoxin Dq-3104</fullName>
    </alternativeName>
    <alternativeName>
        <fullName evidence="4">Poneratoxin</fullName>
    </alternativeName>
</protein>
<keyword id="KW-0027">Amidation</keyword>
<keyword id="KW-0044">Antibiotic</keyword>
<keyword id="KW-0929">Antimicrobial</keyword>
<keyword id="KW-0903">Direct protein sequencing</keyword>
<keyword id="KW-1185">Reference proteome</keyword>
<keyword id="KW-0964">Secreted</keyword>
<keyword id="KW-0800">Toxin</keyword>
<feature type="peptide" id="PRO_0000430021" description="M-poneritoxin-Dq4a" evidence="1">
    <location>
        <begin position="1"/>
        <end position="28"/>
    </location>
</feature>
<feature type="modified residue" description="Alanine amide" evidence="1">
    <location>
        <position position="28"/>
    </location>
</feature>
<feature type="mutagenesis site" description="No effect on antimicrobial activity." evidence="1">
    <original>DS</original>
    <variation>EM</variation>
    <location>
        <begin position="19"/>
        <end position="20"/>
    </location>
</feature>
<feature type="unsure residue" description="L or I" evidence="1">
    <location>
        <position position="2"/>
    </location>
</feature>
<feature type="unsure residue" description="I or L" evidence="1">
    <location>
        <position position="13"/>
    </location>
</feature>
<feature type="unsure residue" description="L or I" evidence="1">
    <location>
        <position position="25"/>
    </location>
</feature>